<protein>
    <recommendedName>
        <fullName evidence="1">Arginine repressor</fullName>
    </recommendedName>
</protein>
<name>ARGR_BIFLD</name>
<feature type="chain" id="PRO_1000097858" description="Arginine repressor">
    <location>
        <begin position="1"/>
        <end position="170"/>
    </location>
</feature>
<accession>B3DSY8</accession>
<proteinExistence type="inferred from homology"/>
<organism>
    <name type="scientific">Bifidobacterium longum (strain DJO10A)</name>
    <dbReference type="NCBI Taxonomy" id="205913"/>
    <lineage>
        <taxon>Bacteria</taxon>
        <taxon>Bacillati</taxon>
        <taxon>Actinomycetota</taxon>
        <taxon>Actinomycetes</taxon>
        <taxon>Bifidobacteriales</taxon>
        <taxon>Bifidobacteriaceae</taxon>
        <taxon>Bifidobacterium</taxon>
    </lineage>
</organism>
<dbReference type="EMBL" id="CP000605">
    <property type="protein sequence ID" value="ACD98257.1"/>
    <property type="molecule type" value="Genomic_DNA"/>
</dbReference>
<dbReference type="RefSeq" id="WP_010080799.1">
    <property type="nucleotide sequence ID" value="NZ_AABM02000002.1"/>
</dbReference>
<dbReference type="SMR" id="B3DSY8"/>
<dbReference type="KEGG" id="blj:BLD_0811"/>
<dbReference type="HOGENOM" id="CLU_097103_1_1_11"/>
<dbReference type="UniPathway" id="UPA00068"/>
<dbReference type="Proteomes" id="UP000002419">
    <property type="component" value="Chromosome"/>
</dbReference>
<dbReference type="GO" id="GO:0005737">
    <property type="term" value="C:cytoplasm"/>
    <property type="evidence" value="ECO:0007669"/>
    <property type="project" value="UniProtKB-SubCell"/>
</dbReference>
<dbReference type="GO" id="GO:0034618">
    <property type="term" value="F:arginine binding"/>
    <property type="evidence" value="ECO:0007669"/>
    <property type="project" value="InterPro"/>
</dbReference>
<dbReference type="GO" id="GO:0003677">
    <property type="term" value="F:DNA binding"/>
    <property type="evidence" value="ECO:0007669"/>
    <property type="project" value="UniProtKB-KW"/>
</dbReference>
<dbReference type="GO" id="GO:0003700">
    <property type="term" value="F:DNA-binding transcription factor activity"/>
    <property type="evidence" value="ECO:0007669"/>
    <property type="project" value="UniProtKB-UniRule"/>
</dbReference>
<dbReference type="GO" id="GO:0006526">
    <property type="term" value="P:L-arginine biosynthetic process"/>
    <property type="evidence" value="ECO:0007669"/>
    <property type="project" value="UniProtKB-UniPathway"/>
</dbReference>
<dbReference type="GO" id="GO:0051259">
    <property type="term" value="P:protein complex oligomerization"/>
    <property type="evidence" value="ECO:0007669"/>
    <property type="project" value="InterPro"/>
</dbReference>
<dbReference type="GO" id="GO:1900079">
    <property type="term" value="P:regulation of arginine biosynthetic process"/>
    <property type="evidence" value="ECO:0007669"/>
    <property type="project" value="UniProtKB-UniRule"/>
</dbReference>
<dbReference type="Gene3D" id="3.30.1360.40">
    <property type="match status" value="1"/>
</dbReference>
<dbReference type="Gene3D" id="1.10.10.10">
    <property type="entry name" value="Winged helix-like DNA-binding domain superfamily/Winged helix DNA-binding domain"/>
    <property type="match status" value="1"/>
</dbReference>
<dbReference type="HAMAP" id="MF_00173">
    <property type="entry name" value="Arg_repressor"/>
    <property type="match status" value="1"/>
</dbReference>
<dbReference type="InterPro" id="IPR001669">
    <property type="entry name" value="Arg_repress"/>
</dbReference>
<dbReference type="InterPro" id="IPR020899">
    <property type="entry name" value="Arg_repress_C"/>
</dbReference>
<dbReference type="InterPro" id="IPR036251">
    <property type="entry name" value="Arg_repress_C_sf"/>
</dbReference>
<dbReference type="InterPro" id="IPR020900">
    <property type="entry name" value="Arg_repress_DNA-bd"/>
</dbReference>
<dbReference type="InterPro" id="IPR036388">
    <property type="entry name" value="WH-like_DNA-bd_sf"/>
</dbReference>
<dbReference type="InterPro" id="IPR036390">
    <property type="entry name" value="WH_DNA-bd_sf"/>
</dbReference>
<dbReference type="PANTHER" id="PTHR34471">
    <property type="entry name" value="ARGININE REPRESSOR"/>
    <property type="match status" value="1"/>
</dbReference>
<dbReference type="PANTHER" id="PTHR34471:SF1">
    <property type="entry name" value="ARGININE REPRESSOR"/>
    <property type="match status" value="1"/>
</dbReference>
<dbReference type="Pfam" id="PF01316">
    <property type="entry name" value="Arg_repressor"/>
    <property type="match status" value="1"/>
</dbReference>
<dbReference type="Pfam" id="PF02863">
    <property type="entry name" value="Arg_repressor_C"/>
    <property type="match status" value="1"/>
</dbReference>
<dbReference type="PRINTS" id="PR01467">
    <property type="entry name" value="ARGREPRESSOR"/>
</dbReference>
<dbReference type="SUPFAM" id="SSF55252">
    <property type="entry name" value="C-terminal domain of arginine repressor"/>
    <property type="match status" value="1"/>
</dbReference>
<dbReference type="SUPFAM" id="SSF46785">
    <property type="entry name" value="Winged helix' DNA-binding domain"/>
    <property type="match status" value="1"/>
</dbReference>
<evidence type="ECO:0000255" key="1">
    <source>
        <dbReference type="HAMAP-Rule" id="MF_00173"/>
    </source>
</evidence>
<gene>
    <name evidence="1" type="primary">argR</name>
    <name type="ordered locus">BLD_0811</name>
</gene>
<reference key="1">
    <citation type="journal article" date="2008" name="BMC Genomics">
        <title>Comparative genomic analysis of the gut bacterium Bifidobacterium longum reveals loci susceptible to deletion during pure culture growth.</title>
        <authorList>
            <person name="Lee J.H."/>
            <person name="Karamychev V.N."/>
            <person name="Kozyavkin S.A."/>
            <person name="Mills D."/>
            <person name="Pavlov A.R."/>
            <person name="Pavlova N.V."/>
            <person name="Polouchine N.N."/>
            <person name="Richardson P.M."/>
            <person name="Shakhova V.V."/>
            <person name="Slesarev A.I."/>
            <person name="Weimer B."/>
            <person name="O'Sullivan D.J."/>
        </authorList>
    </citation>
    <scope>NUCLEOTIDE SEQUENCE [LARGE SCALE GENOMIC DNA]</scope>
    <source>
        <strain>DJO10A</strain>
    </source>
</reference>
<comment type="function">
    <text evidence="1">Regulates arginine biosynthesis genes.</text>
</comment>
<comment type="pathway">
    <text>Amino-acid biosynthesis; L-arginine biosynthesis [regulation].</text>
</comment>
<comment type="subcellular location">
    <subcellularLocation>
        <location evidence="1">Cytoplasm</location>
    </subcellularLocation>
</comment>
<comment type="similarity">
    <text evidence="1">Belongs to the ArgR family.</text>
</comment>
<sequence length="170" mass="17714">MSETGPSLQRPATRAARLSAIEQALATHIITSQSQLSKILIDEGIAVTQATLSRDLDEMHAVKTRLKDGTVAYAVGRSVVASEGEDVGERGEAQMSRVLNGLVTSVAAAGNLVVVHTPSGAAQYVASVIDKQPIEGVLGTIAGDDTVMVICTNDDTAVSRSDWLLSLASK</sequence>
<keyword id="KW-0028">Amino-acid biosynthesis</keyword>
<keyword id="KW-0055">Arginine biosynthesis</keyword>
<keyword id="KW-0963">Cytoplasm</keyword>
<keyword id="KW-0238">DNA-binding</keyword>
<keyword id="KW-0678">Repressor</keyword>
<keyword id="KW-0804">Transcription</keyword>
<keyword id="KW-0805">Transcription regulation</keyword>